<comment type="catalytic activity">
    <reaction evidence="3 4">
        <text>Preferential cleavage: Tyr-|-Xaa, Trp-|-Xaa, Phe-|-Xaa, Leu-|-Xaa.</text>
        <dbReference type="EC" id="3.4.21.1"/>
    </reaction>
</comment>
<comment type="subcellular location">
    <subcellularLocation>
        <location>Secreted</location>
        <location>Extracellular space</location>
    </subcellularLocation>
</comment>
<comment type="similarity">
    <text evidence="2">Belongs to the peptidase S1 family.</text>
</comment>
<comment type="online information" name="Wikipedia">
    <link uri="https://en.wikipedia.org/wiki/Chymotrypsin"/>
    <text>Chymotrypsin entry</text>
</comment>
<keyword id="KW-0222">Digestion</keyword>
<keyword id="KW-1015">Disulfide bond</keyword>
<keyword id="KW-0378">Hydrolase</keyword>
<keyword id="KW-0645">Protease</keyword>
<keyword id="KW-1267">Proteomics identification</keyword>
<keyword id="KW-1185">Reference proteome</keyword>
<keyword id="KW-0964">Secreted</keyword>
<keyword id="KW-0720">Serine protease</keyword>
<keyword id="KW-0732">Signal</keyword>
<keyword id="KW-0865">Zymogen</keyword>
<protein>
    <recommendedName>
        <fullName>Chymotrypsinogen B2</fullName>
        <ecNumber>3.4.21.1</ecNumber>
    </recommendedName>
    <component>
        <recommendedName>
            <fullName>Chymotrypsin B2 chain A</fullName>
        </recommendedName>
    </component>
    <component>
        <recommendedName>
            <fullName>Chymotrypsin B2 chain B</fullName>
        </recommendedName>
    </component>
    <component>
        <recommendedName>
            <fullName>Chymotrypsin B2 chain C</fullName>
        </recommendedName>
    </component>
</protein>
<proteinExistence type="evidence at protein level"/>
<name>CTRB2_HUMAN</name>
<accession>Q6GPI1</accession>
<accession>A8K707</accession>
<sequence length="263" mass="27923">MAFLWLLSCWALLGTTFGCGVPAIHPVLSGLSRIVNGEDAVPGSWPWQVSLQDKTGFHFCGGSLISEDWVVTAAHCGVRTSDVVVAGEFDQGSDEENIQVLKIAKVFKNPKFSILTVNNDITLLKLATPARFSQTVSAVCLPSADDDFPAGTLCATTGWGKTKYNANKTPDKLQQAALPLLSNAECKKSWGRRITDVMICAGASGVSSCMGDSGGPLVCQKDGAWTLVGIVSWGSRTCSTTTPAVYARVAKLIPWVQKILAAN</sequence>
<evidence type="ECO:0000250" key="1"/>
<evidence type="ECO:0000255" key="2">
    <source>
        <dbReference type="PROSITE-ProRule" id="PRU00274"/>
    </source>
</evidence>
<evidence type="ECO:0000255" key="3">
    <source>
        <dbReference type="PROSITE-ProRule" id="PRU10078"/>
    </source>
</evidence>
<evidence type="ECO:0000255" key="4">
    <source>
        <dbReference type="PROSITE-ProRule" id="PRU10079"/>
    </source>
</evidence>
<evidence type="ECO:0000269" key="5">
    <source>
    </source>
</evidence>
<evidence type="ECO:0000305" key="6"/>
<reference key="1">
    <citation type="journal article" date="2004" name="Nat. Genet.">
        <title>Complete sequencing and characterization of 21,243 full-length human cDNAs.</title>
        <authorList>
            <person name="Ota T."/>
            <person name="Suzuki Y."/>
            <person name="Nishikawa T."/>
            <person name="Otsuki T."/>
            <person name="Sugiyama T."/>
            <person name="Irie R."/>
            <person name="Wakamatsu A."/>
            <person name="Hayashi K."/>
            <person name="Sato H."/>
            <person name="Nagai K."/>
            <person name="Kimura K."/>
            <person name="Makita H."/>
            <person name="Sekine M."/>
            <person name="Obayashi M."/>
            <person name="Nishi T."/>
            <person name="Shibahara T."/>
            <person name="Tanaka T."/>
            <person name="Ishii S."/>
            <person name="Yamamoto J."/>
            <person name="Saito K."/>
            <person name="Kawai Y."/>
            <person name="Isono Y."/>
            <person name="Nakamura Y."/>
            <person name="Nagahari K."/>
            <person name="Murakami K."/>
            <person name="Yasuda T."/>
            <person name="Iwayanagi T."/>
            <person name="Wagatsuma M."/>
            <person name="Shiratori A."/>
            <person name="Sudo H."/>
            <person name="Hosoiri T."/>
            <person name="Kaku Y."/>
            <person name="Kodaira H."/>
            <person name="Kondo H."/>
            <person name="Sugawara M."/>
            <person name="Takahashi M."/>
            <person name="Kanda K."/>
            <person name="Yokoi T."/>
            <person name="Furuya T."/>
            <person name="Kikkawa E."/>
            <person name="Omura Y."/>
            <person name="Abe K."/>
            <person name="Kamihara K."/>
            <person name="Katsuta N."/>
            <person name="Sato K."/>
            <person name="Tanikawa M."/>
            <person name="Yamazaki M."/>
            <person name="Ninomiya K."/>
            <person name="Ishibashi T."/>
            <person name="Yamashita H."/>
            <person name="Murakawa K."/>
            <person name="Fujimori K."/>
            <person name="Tanai H."/>
            <person name="Kimata M."/>
            <person name="Watanabe M."/>
            <person name="Hiraoka S."/>
            <person name="Chiba Y."/>
            <person name="Ishida S."/>
            <person name="Ono Y."/>
            <person name="Takiguchi S."/>
            <person name="Watanabe S."/>
            <person name="Yosida M."/>
            <person name="Hotuta T."/>
            <person name="Kusano J."/>
            <person name="Kanehori K."/>
            <person name="Takahashi-Fujii A."/>
            <person name="Hara H."/>
            <person name="Tanase T.-O."/>
            <person name="Nomura Y."/>
            <person name="Togiya S."/>
            <person name="Komai F."/>
            <person name="Hara R."/>
            <person name="Takeuchi K."/>
            <person name="Arita M."/>
            <person name="Imose N."/>
            <person name="Musashino K."/>
            <person name="Yuuki H."/>
            <person name="Oshima A."/>
            <person name="Sasaki N."/>
            <person name="Aotsuka S."/>
            <person name="Yoshikawa Y."/>
            <person name="Matsunawa H."/>
            <person name="Ichihara T."/>
            <person name="Shiohata N."/>
            <person name="Sano S."/>
            <person name="Moriya S."/>
            <person name="Momiyama H."/>
            <person name="Satoh N."/>
            <person name="Takami S."/>
            <person name="Terashima Y."/>
            <person name="Suzuki O."/>
            <person name="Nakagawa S."/>
            <person name="Senoh A."/>
            <person name="Mizoguchi H."/>
            <person name="Goto Y."/>
            <person name="Shimizu F."/>
            <person name="Wakebe H."/>
            <person name="Hishigaki H."/>
            <person name="Watanabe T."/>
            <person name="Sugiyama A."/>
            <person name="Takemoto M."/>
            <person name="Kawakami B."/>
            <person name="Yamazaki M."/>
            <person name="Watanabe K."/>
            <person name="Kumagai A."/>
            <person name="Itakura S."/>
            <person name="Fukuzumi Y."/>
            <person name="Fujimori Y."/>
            <person name="Komiyama M."/>
            <person name="Tashiro H."/>
            <person name="Tanigami A."/>
            <person name="Fujiwara T."/>
            <person name="Ono T."/>
            <person name="Yamada K."/>
            <person name="Fujii Y."/>
            <person name="Ozaki K."/>
            <person name="Hirao M."/>
            <person name="Ohmori Y."/>
            <person name="Kawabata A."/>
            <person name="Hikiji T."/>
            <person name="Kobatake N."/>
            <person name="Inagaki H."/>
            <person name="Ikema Y."/>
            <person name="Okamoto S."/>
            <person name="Okitani R."/>
            <person name="Kawakami T."/>
            <person name="Noguchi S."/>
            <person name="Itoh T."/>
            <person name="Shigeta K."/>
            <person name="Senba T."/>
            <person name="Matsumura K."/>
            <person name="Nakajima Y."/>
            <person name="Mizuno T."/>
            <person name="Morinaga M."/>
            <person name="Sasaki M."/>
            <person name="Togashi T."/>
            <person name="Oyama M."/>
            <person name="Hata H."/>
            <person name="Watanabe M."/>
            <person name="Komatsu T."/>
            <person name="Mizushima-Sugano J."/>
            <person name="Satoh T."/>
            <person name="Shirai Y."/>
            <person name="Takahashi Y."/>
            <person name="Nakagawa K."/>
            <person name="Okumura K."/>
            <person name="Nagase T."/>
            <person name="Nomura N."/>
            <person name="Kikuchi H."/>
            <person name="Masuho Y."/>
            <person name="Yamashita R."/>
            <person name="Nakai K."/>
            <person name="Yada T."/>
            <person name="Nakamura Y."/>
            <person name="Ohara O."/>
            <person name="Isogai T."/>
            <person name="Sugano S."/>
        </authorList>
    </citation>
    <scope>NUCLEOTIDE SEQUENCE [LARGE SCALE MRNA]</scope>
    <source>
        <tissue>Prostate</tissue>
    </source>
</reference>
<reference key="2">
    <citation type="journal article" date="2004" name="Nature">
        <title>The sequence and analysis of duplication-rich human chromosome 16.</title>
        <authorList>
            <person name="Martin J."/>
            <person name="Han C."/>
            <person name="Gordon L.A."/>
            <person name="Terry A."/>
            <person name="Prabhakar S."/>
            <person name="She X."/>
            <person name="Xie G."/>
            <person name="Hellsten U."/>
            <person name="Chan Y.M."/>
            <person name="Altherr M."/>
            <person name="Couronne O."/>
            <person name="Aerts A."/>
            <person name="Bajorek E."/>
            <person name="Black S."/>
            <person name="Blumer H."/>
            <person name="Branscomb E."/>
            <person name="Brown N.C."/>
            <person name="Bruno W.J."/>
            <person name="Buckingham J.M."/>
            <person name="Callen D.F."/>
            <person name="Campbell C.S."/>
            <person name="Campbell M.L."/>
            <person name="Campbell E.W."/>
            <person name="Caoile C."/>
            <person name="Challacombe J.F."/>
            <person name="Chasteen L.A."/>
            <person name="Chertkov O."/>
            <person name="Chi H.C."/>
            <person name="Christensen M."/>
            <person name="Clark L.M."/>
            <person name="Cohn J.D."/>
            <person name="Denys M."/>
            <person name="Detter J.C."/>
            <person name="Dickson M."/>
            <person name="Dimitrijevic-Bussod M."/>
            <person name="Escobar J."/>
            <person name="Fawcett J.J."/>
            <person name="Flowers D."/>
            <person name="Fotopulos D."/>
            <person name="Glavina T."/>
            <person name="Gomez M."/>
            <person name="Gonzales E."/>
            <person name="Goodstein D."/>
            <person name="Goodwin L.A."/>
            <person name="Grady D.L."/>
            <person name="Grigoriev I."/>
            <person name="Groza M."/>
            <person name="Hammon N."/>
            <person name="Hawkins T."/>
            <person name="Haydu L."/>
            <person name="Hildebrand C.E."/>
            <person name="Huang W."/>
            <person name="Israni S."/>
            <person name="Jett J."/>
            <person name="Jewett P.B."/>
            <person name="Kadner K."/>
            <person name="Kimball H."/>
            <person name="Kobayashi A."/>
            <person name="Krawczyk M.-C."/>
            <person name="Leyba T."/>
            <person name="Longmire J.L."/>
            <person name="Lopez F."/>
            <person name="Lou Y."/>
            <person name="Lowry S."/>
            <person name="Ludeman T."/>
            <person name="Manohar C.F."/>
            <person name="Mark G.A."/>
            <person name="McMurray K.L."/>
            <person name="Meincke L.J."/>
            <person name="Morgan J."/>
            <person name="Moyzis R.K."/>
            <person name="Mundt M.O."/>
            <person name="Munk A.C."/>
            <person name="Nandkeshwar R.D."/>
            <person name="Pitluck S."/>
            <person name="Pollard M."/>
            <person name="Predki P."/>
            <person name="Parson-Quintana B."/>
            <person name="Ramirez L."/>
            <person name="Rash S."/>
            <person name="Retterer J."/>
            <person name="Ricke D.O."/>
            <person name="Robinson D.L."/>
            <person name="Rodriguez A."/>
            <person name="Salamov A."/>
            <person name="Saunders E.H."/>
            <person name="Scott D."/>
            <person name="Shough T."/>
            <person name="Stallings R.L."/>
            <person name="Stalvey M."/>
            <person name="Sutherland R.D."/>
            <person name="Tapia R."/>
            <person name="Tesmer J.G."/>
            <person name="Thayer N."/>
            <person name="Thompson L.S."/>
            <person name="Tice H."/>
            <person name="Torney D.C."/>
            <person name="Tran-Gyamfi M."/>
            <person name="Tsai M."/>
            <person name="Ulanovsky L.E."/>
            <person name="Ustaszewska A."/>
            <person name="Vo N."/>
            <person name="White P.S."/>
            <person name="Williams A.L."/>
            <person name="Wills P.L."/>
            <person name="Wu J.-R."/>
            <person name="Wu K."/>
            <person name="Yang J."/>
            <person name="DeJong P."/>
            <person name="Bruce D."/>
            <person name="Doggett N.A."/>
            <person name="Deaven L."/>
            <person name="Schmutz J."/>
            <person name="Grimwood J."/>
            <person name="Richardson P."/>
            <person name="Rokhsar D.S."/>
            <person name="Eichler E.E."/>
            <person name="Gilna P."/>
            <person name="Lucas S.M."/>
            <person name="Myers R.M."/>
            <person name="Rubin E.M."/>
            <person name="Pennacchio L.A."/>
        </authorList>
    </citation>
    <scope>NUCLEOTIDE SEQUENCE [LARGE SCALE GENOMIC DNA]</scope>
</reference>
<reference key="3">
    <citation type="journal article" date="2004" name="Genome Res.">
        <title>The status, quality, and expansion of the NIH full-length cDNA project: the Mammalian Gene Collection (MGC).</title>
        <authorList>
            <consortium name="The MGC Project Team"/>
        </authorList>
    </citation>
    <scope>NUCLEOTIDE SEQUENCE [LARGE SCALE MRNA]</scope>
    <scope>VARIANT THR-250</scope>
    <source>
        <tissue>Pancreas</tissue>
    </source>
</reference>
<dbReference type="EC" id="3.4.21.1"/>
<dbReference type="EMBL" id="AK291822">
    <property type="protein sequence ID" value="BAF84511.1"/>
    <property type="molecule type" value="mRNA"/>
</dbReference>
<dbReference type="EMBL" id="AC009078">
    <property type="status" value="NOT_ANNOTATED_CDS"/>
    <property type="molecule type" value="Genomic_DNA"/>
</dbReference>
<dbReference type="EMBL" id="BC073145">
    <property type="protein sequence ID" value="AAH73145.1"/>
    <property type="molecule type" value="mRNA"/>
</dbReference>
<dbReference type="CCDS" id="CCDS32489.1"/>
<dbReference type="RefSeq" id="NP_001020371.3">
    <property type="nucleotide sequence ID" value="NM_001025200.4"/>
</dbReference>
<dbReference type="SMR" id="Q6GPI1"/>
<dbReference type="BioGRID" id="136533">
    <property type="interactions" value="2"/>
</dbReference>
<dbReference type="FunCoup" id="Q6GPI1">
    <property type="interactions" value="260"/>
</dbReference>
<dbReference type="IntAct" id="Q6GPI1">
    <property type="interactions" value="1"/>
</dbReference>
<dbReference type="STRING" id="9606.ENSP00000303963"/>
<dbReference type="BindingDB" id="Q6GPI1"/>
<dbReference type="ChEMBL" id="CHEMBL4523987"/>
<dbReference type="MEROPS" id="S01.152"/>
<dbReference type="iPTMnet" id="Q6GPI1"/>
<dbReference type="PhosphoSitePlus" id="Q6GPI1"/>
<dbReference type="BioMuta" id="CTRB2"/>
<dbReference type="DMDM" id="290457638"/>
<dbReference type="MassIVE" id="Q6GPI1"/>
<dbReference type="PaxDb" id="9606-ENSP00000303963"/>
<dbReference type="PeptideAtlas" id="Q6GPI1"/>
<dbReference type="ProteomicsDB" id="66317"/>
<dbReference type="Antibodypedia" id="81624">
    <property type="antibodies" value="3 antibodies from 2 providers"/>
</dbReference>
<dbReference type="DNASU" id="440387"/>
<dbReference type="Ensembl" id="ENST00000303037.13">
    <property type="protein sequence ID" value="ENSP00000303963.8"/>
    <property type="gene ID" value="ENSG00000168928.13"/>
</dbReference>
<dbReference type="GeneID" id="440387"/>
<dbReference type="KEGG" id="hsa:440387"/>
<dbReference type="MANE-Select" id="ENST00000303037.13">
    <property type="protein sequence ID" value="ENSP00000303963.8"/>
    <property type="RefSeq nucleotide sequence ID" value="NM_001025200.4"/>
    <property type="RefSeq protein sequence ID" value="NP_001020371.3"/>
</dbReference>
<dbReference type="UCSC" id="uc002fdr.4">
    <property type="organism name" value="human"/>
</dbReference>
<dbReference type="AGR" id="HGNC:2522"/>
<dbReference type="CTD" id="440387"/>
<dbReference type="DisGeNET" id="440387"/>
<dbReference type="GeneCards" id="CTRB2"/>
<dbReference type="HGNC" id="HGNC:2522">
    <property type="gene designation" value="CTRB2"/>
</dbReference>
<dbReference type="HPA" id="ENSG00000168928">
    <property type="expression patterns" value="Tissue enriched (pancreas)"/>
</dbReference>
<dbReference type="MIM" id="619620">
    <property type="type" value="gene"/>
</dbReference>
<dbReference type="neXtProt" id="NX_Q6GPI1"/>
<dbReference type="OpenTargets" id="ENSG00000168928"/>
<dbReference type="PharmGKB" id="PA27023"/>
<dbReference type="VEuPathDB" id="HostDB:ENSG00000168928"/>
<dbReference type="eggNOG" id="KOG3627">
    <property type="taxonomic scope" value="Eukaryota"/>
</dbReference>
<dbReference type="GeneTree" id="ENSGT00940000153216"/>
<dbReference type="HOGENOM" id="CLU_006842_7_6_1"/>
<dbReference type="InParanoid" id="Q6GPI1"/>
<dbReference type="OMA" id="WGFRIAD"/>
<dbReference type="OrthoDB" id="5918597at2759"/>
<dbReference type="PAN-GO" id="Q6GPI1">
    <property type="GO annotations" value="2 GO annotations based on evolutionary models"/>
</dbReference>
<dbReference type="PhylomeDB" id="Q6GPI1"/>
<dbReference type="TreeFam" id="TF330455"/>
<dbReference type="PathwayCommons" id="Q6GPI1"/>
<dbReference type="Reactome" id="R-HSA-1592389">
    <property type="pathway name" value="Activation of Matrix Metalloproteinases"/>
</dbReference>
<dbReference type="Reactome" id="R-HSA-9758881">
    <property type="pathway name" value="Uptake of dietary cobalamins into enterocytes"/>
</dbReference>
<dbReference type="SignaLink" id="Q6GPI1"/>
<dbReference type="BioGRID-ORCS" id="440387">
    <property type="hits" value="8 hits in 1083 CRISPR screens"/>
</dbReference>
<dbReference type="GenomeRNAi" id="440387"/>
<dbReference type="Pharos" id="Q6GPI1">
    <property type="development level" value="Tdark"/>
</dbReference>
<dbReference type="PRO" id="PR:Q6GPI1"/>
<dbReference type="Proteomes" id="UP000005640">
    <property type="component" value="Chromosome 16"/>
</dbReference>
<dbReference type="RNAct" id="Q6GPI1">
    <property type="molecule type" value="protein"/>
</dbReference>
<dbReference type="Bgee" id="ENSG00000168928">
    <property type="expression patterns" value="Expressed in body of pancreas and 84 other cell types or tissues"/>
</dbReference>
<dbReference type="ExpressionAtlas" id="Q6GPI1">
    <property type="expression patterns" value="baseline and differential"/>
</dbReference>
<dbReference type="GO" id="GO:0005576">
    <property type="term" value="C:extracellular region"/>
    <property type="evidence" value="ECO:0000304"/>
    <property type="project" value="Reactome"/>
</dbReference>
<dbReference type="GO" id="GO:0004252">
    <property type="term" value="F:serine-type endopeptidase activity"/>
    <property type="evidence" value="ECO:0000318"/>
    <property type="project" value="GO_Central"/>
</dbReference>
<dbReference type="GO" id="GO:0007586">
    <property type="term" value="P:digestion"/>
    <property type="evidence" value="ECO:0007669"/>
    <property type="project" value="UniProtKB-KW"/>
</dbReference>
<dbReference type="GO" id="GO:0006508">
    <property type="term" value="P:proteolysis"/>
    <property type="evidence" value="ECO:0000318"/>
    <property type="project" value="GO_Central"/>
</dbReference>
<dbReference type="CDD" id="cd00190">
    <property type="entry name" value="Tryp_SPc"/>
    <property type="match status" value="1"/>
</dbReference>
<dbReference type="FunFam" id="2.40.10.10:FF:000118">
    <property type="entry name" value="Chymotrypsinogen A"/>
    <property type="match status" value="1"/>
</dbReference>
<dbReference type="FunFam" id="2.40.10.10:FF:000176">
    <property type="entry name" value="Chymotrypsinogen A"/>
    <property type="match status" value="1"/>
</dbReference>
<dbReference type="Gene3D" id="2.40.10.10">
    <property type="entry name" value="Trypsin-like serine proteases"/>
    <property type="match status" value="1"/>
</dbReference>
<dbReference type="InterPro" id="IPR009003">
    <property type="entry name" value="Peptidase_S1_PA"/>
</dbReference>
<dbReference type="InterPro" id="IPR043504">
    <property type="entry name" value="Peptidase_S1_PA_chymotrypsin"/>
</dbReference>
<dbReference type="InterPro" id="IPR001314">
    <property type="entry name" value="Peptidase_S1A"/>
</dbReference>
<dbReference type="InterPro" id="IPR001254">
    <property type="entry name" value="Trypsin_dom"/>
</dbReference>
<dbReference type="InterPro" id="IPR018114">
    <property type="entry name" value="TRYPSIN_HIS"/>
</dbReference>
<dbReference type="InterPro" id="IPR033116">
    <property type="entry name" value="TRYPSIN_SER"/>
</dbReference>
<dbReference type="PANTHER" id="PTHR24250">
    <property type="entry name" value="CHYMOTRYPSIN-RELATED"/>
    <property type="match status" value="1"/>
</dbReference>
<dbReference type="PANTHER" id="PTHR24250:SF53">
    <property type="entry name" value="CHYMOTRYPSINOGEN B2"/>
    <property type="match status" value="1"/>
</dbReference>
<dbReference type="Pfam" id="PF00089">
    <property type="entry name" value="Trypsin"/>
    <property type="match status" value="1"/>
</dbReference>
<dbReference type="PRINTS" id="PR00722">
    <property type="entry name" value="CHYMOTRYPSIN"/>
</dbReference>
<dbReference type="SMART" id="SM00020">
    <property type="entry name" value="Tryp_SPc"/>
    <property type="match status" value="1"/>
</dbReference>
<dbReference type="SUPFAM" id="SSF50494">
    <property type="entry name" value="Trypsin-like serine proteases"/>
    <property type="match status" value="1"/>
</dbReference>
<dbReference type="PROSITE" id="PS50240">
    <property type="entry name" value="TRYPSIN_DOM"/>
    <property type="match status" value="1"/>
</dbReference>
<dbReference type="PROSITE" id="PS00134">
    <property type="entry name" value="TRYPSIN_HIS"/>
    <property type="match status" value="1"/>
</dbReference>
<dbReference type="PROSITE" id="PS00135">
    <property type="entry name" value="TRYPSIN_SER"/>
    <property type="match status" value="1"/>
</dbReference>
<gene>
    <name type="primary">CTRB2</name>
</gene>
<organism>
    <name type="scientific">Homo sapiens</name>
    <name type="common">Human</name>
    <dbReference type="NCBI Taxonomy" id="9606"/>
    <lineage>
        <taxon>Eukaryota</taxon>
        <taxon>Metazoa</taxon>
        <taxon>Chordata</taxon>
        <taxon>Craniata</taxon>
        <taxon>Vertebrata</taxon>
        <taxon>Euteleostomi</taxon>
        <taxon>Mammalia</taxon>
        <taxon>Eutheria</taxon>
        <taxon>Euarchontoglires</taxon>
        <taxon>Primates</taxon>
        <taxon>Haplorrhini</taxon>
        <taxon>Catarrhini</taxon>
        <taxon>Hominidae</taxon>
        <taxon>Homo</taxon>
    </lineage>
</organism>
<feature type="signal peptide" evidence="1">
    <location>
        <begin position="1"/>
        <end position="18"/>
    </location>
</feature>
<feature type="chain" id="PRO_0000285870" description="Chymotrypsinogen B2">
    <location>
        <begin position="19"/>
        <end position="263"/>
    </location>
</feature>
<feature type="chain" id="PRO_0000285871" description="Chymotrypsin B2 chain A">
    <location>
        <begin position="19"/>
        <end position="31"/>
    </location>
</feature>
<feature type="chain" id="PRO_0000285872" description="Chymotrypsin B2 chain B">
    <location>
        <begin position="34"/>
        <end position="164"/>
    </location>
</feature>
<feature type="chain" id="PRO_0000285873" description="Chymotrypsin B2 chain C">
    <location>
        <begin position="167"/>
        <end position="263"/>
    </location>
</feature>
<feature type="domain" description="Peptidase S1" evidence="2">
    <location>
        <begin position="34"/>
        <end position="261"/>
    </location>
</feature>
<feature type="active site" description="Charge relay system" evidence="1">
    <location>
        <position position="75"/>
    </location>
</feature>
<feature type="active site" description="Charge relay system" evidence="1">
    <location>
        <position position="120"/>
    </location>
</feature>
<feature type="active site" description="Charge relay system" evidence="1">
    <location>
        <position position="213"/>
    </location>
</feature>
<feature type="disulfide bond" evidence="2">
    <location>
        <begin position="19"/>
        <end position="140"/>
    </location>
</feature>
<feature type="disulfide bond" evidence="2">
    <location>
        <begin position="60"/>
        <end position="76"/>
    </location>
</feature>
<feature type="disulfide bond" evidence="2">
    <location>
        <begin position="154"/>
        <end position="219"/>
    </location>
</feature>
<feature type="disulfide bond" evidence="2">
    <location>
        <begin position="186"/>
        <end position="200"/>
    </location>
</feature>
<feature type="disulfide bond" evidence="2">
    <location>
        <begin position="209"/>
        <end position="238"/>
    </location>
</feature>
<feature type="sequence variant" id="VAR_062766" description="In dbSNP:rs4737." evidence="5">
    <original>A</original>
    <variation>T</variation>
    <location>
        <position position="250"/>
    </location>
</feature>
<feature type="sequence conflict" description="In Ref. 3; AAH73145." evidence="6" ref="3">
    <original>F</original>
    <variation>S</variation>
    <location>
        <position position="3"/>
    </location>
</feature>
<feature type="sequence conflict" description="In Ref. 3; AAH73145." evidence="6" ref="3">
    <original>WALLGTT</original>
    <variation>FSLVGAA</variation>
    <location>
        <begin position="10"/>
        <end position="16"/>
    </location>
</feature>